<dbReference type="EMBL" id="AL123456">
    <property type="protein sequence ID" value="CCP43784.1"/>
    <property type="molecule type" value="Genomic_DNA"/>
</dbReference>
<dbReference type="RefSeq" id="NP_215549.1">
    <property type="nucleotide sequence ID" value="NC_000962.3"/>
</dbReference>
<dbReference type="RefSeq" id="WP_003405328.1">
    <property type="nucleotide sequence ID" value="NZ_NVQJ01000018.1"/>
</dbReference>
<dbReference type="SMR" id="L7N689"/>
<dbReference type="FunCoup" id="L7N689">
    <property type="interactions" value="65"/>
</dbReference>
<dbReference type="STRING" id="83332.Rv1033c"/>
<dbReference type="PaxDb" id="83332-Rv1033c"/>
<dbReference type="DNASU" id="887957"/>
<dbReference type="GeneID" id="45425007"/>
<dbReference type="GeneID" id="887957"/>
<dbReference type="KEGG" id="mtu:Rv1033c"/>
<dbReference type="KEGG" id="mtv:RVBD_1033c"/>
<dbReference type="PATRIC" id="fig|83332.111.peg.1147"/>
<dbReference type="TubercuList" id="Rv1033c"/>
<dbReference type="eggNOG" id="COG0745">
    <property type="taxonomic scope" value="Bacteria"/>
</dbReference>
<dbReference type="InParanoid" id="L7N689"/>
<dbReference type="OrthoDB" id="4760923at2"/>
<dbReference type="PhylomeDB" id="L7N689"/>
<dbReference type="Proteomes" id="UP000001584">
    <property type="component" value="Chromosome"/>
</dbReference>
<dbReference type="GO" id="GO:0005829">
    <property type="term" value="C:cytosol"/>
    <property type="evidence" value="ECO:0000318"/>
    <property type="project" value="GO_Central"/>
</dbReference>
<dbReference type="GO" id="GO:0032993">
    <property type="term" value="C:protein-DNA complex"/>
    <property type="evidence" value="ECO:0000318"/>
    <property type="project" value="GO_Central"/>
</dbReference>
<dbReference type="GO" id="GO:0000156">
    <property type="term" value="F:phosphorelay response regulator activity"/>
    <property type="evidence" value="ECO:0000318"/>
    <property type="project" value="GO_Central"/>
</dbReference>
<dbReference type="GO" id="GO:0000976">
    <property type="term" value="F:transcription cis-regulatory region binding"/>
    <property type="evidence" value="ECO:0000318"/>
    <property type="project" value="GO_Central"/>
</dbReference>
<dbReference type="GO" id="GO:0006355">
    <property type="term" value="P:regulation of DNA-templated transcription"/>
    <property type="evidence" value="ECO:0000318"/>
    <property type="project" value="GO_Central"/>
</dbReference>
<dbReference type="CDD" id="cd17615">
    <property type="entry name" value="REC_OmpR_MtPhoP-like"/>
    <property type="match status" value="1"/>
</dbReference>
<dbReference type="CDD" id="cd00383">
    <property type="entry name" value="trans_reg_C"/>
    <property type="match status" value="1"/>
</dbReference>
<dbReference type="FunFam" id="3.40.50.2300:FF:000001">
    <property type="entry name" value="DNA-binding response regulator PhoB"/>
    <property type="match status" value="1"/>
</dbReference>
<dbReference type="FunFam" id="1.10.10.10:FF:000005">
    <property type="entry name" value="Two-component system response regulator"/>
    <property type="match status" value="1"/>
</dbReference>
<dbReference type="Gene3D" id="3.40.50.2300">
    <property type="match status" value="1"/>
</dbReference>
<dbReference type="Gene3D" id="6.10.250.690">
    <property type="match status" value="1"/>
</dbReference>
<dbReference type="Gene3D" id="1.10.10.10">
    <property type="entry name" value="Winged helix-like DNA-binding domain superfamily/Winged helix DNA-binding domain"/>
    <property type="match status" value="1"/>
</dbReference>
<dbReference type="InterPro" id="IPR011006">
    <property type="entry name" value="CheY-like_superfamily"/>
</dbReference>
<dbReference type="InterPro" id="IPR001867">
    <property type="entry name" value="OmpR/PhoB-type_DNA-bd"/>
</dbReference>
<dbReference type="InterPro" id="IPR016032">
    <property type="entry name" value="Sig_transdc_resp-reg_C-effctor"/>
</dbReference>
<dbReference type="InterPro" id="IPR001789">
    <property type="entry name" value="Sig_transdc_resp-reg_receiver"/>
</dbReference>
<dbReference type="InterPro" id="IPR039420">
    <property type="entry name" value="WalR-like"/>
</dbReference>
<dbReference type="InterPro" id="IPR036388">
    <property type="entry name" value="WH-like_DNA-bd_sf"/>
</dbReference>
<dbReference type="PANTHER" id="PTHR48111">
    <property type="entry name" value="REGULATOR OF RPOS"/>
    <property type="match status" value="1"/>
</dbReference>
<dbReference type="PANTHER" id="PTHR48111:SF28">
    <property type="entry name" value="TRANSCRIPTIONAL REGULATORY PROTEIN TCRX-RELATED"/>
    <property type="match status" value="1"/>
</dbReference>
<dbReference type="Pfam" id="PF00072">
    <property type="entry name" value="Response_reg"/>
    <property type="match status" value="1"/>
</dbReference>
<dbReference type="Pfam" id="PF00486">
    <property type="entry name" value="Trans_reg_C"/>
    <property type="match status" value="1"/>
</dbReference>
<dbReference type="SMART" id="SM00448">
    <property type="entry name" value="REC"/>
    <property type="match status" value="1"/>
</dbReference>
<dbReference type="SMART" id="SM00862">
    <property type="entry name" value="Trans_reg_C"/>
    <property type="match status" value="1"/>
</dbReference>
<dbReference type="SUPFAM" id="SSF46894">
    <property type="entry name" value="C-terminal effector domain of the bipartite response regulators"/>
    <property type="match status" value="1"/>
</dbReference>
<dbReference type="SUPFAM" id="SSF52172">
    <property type="entry name" value="CheY-like"/>
    <property type="match status" value="1"/>
</dbReference>
<dbReference type="PROSITE" id="PS51755">
    <property type="entry name" value="OMPR_PHOB"/>
    <property type="match status" value="1"/>
</dbReference>
<dbReference type="PROSITE" id="PS50110">
    <property type="entry name" value="RESPONSE_REGULATORY"/>
    <property type="match status" value="1"/>
</dbReference>
<name>TRCR_MYCTU</name>
<organism>
    <name type="scientific">Mycobacterium tuberculosis (strain ATCC 25618 / H37Rv)</name>
    <dbReference type="NCBI Taxonomy" id="83332"/>
    <lineage>
        <taxon>Bacteria</taxon>
        <taxon>Bacillati</taxon>
        <taxon>Actinomycetota</taxon>
        <taxon>Actinomycetes</taxon>
        <taxon>Mycobacteriales</taxon>
        <taxon>Mycobacteriaceae</taxon>
        <taxon>Mycobacterium</taxon>
        <taxon>Mycobacterium tuberculosis complex</taxon>
    </lineage>
</organism>
<accession>L7N689</accession>
<accession>I6Y9F4</accession>
<proteinExistence type="evidence at protein level"/>
<sequence length="257" mass="29209">MTTMSGYTRSQRPRQAILGQLPRIHRADGSPIRVLLVDDEPALTNLVKMALHYEGWDVEVAHDGQEAIAKFDKVGPDVLVLDIMLPDVDGLEILRRVRESDVYTPTLFLTARDSVMDRVTGLTSGADDYMTKPFSLEELVARLRGLLRRSSHLERPADEALRVGDLTLDGASREVTRDGTPISLSSTEFELLRFLMRNPRRALSRTEILDRVWNYDFAGRTSIVDLYISYLRKKIDSDREPMIHTVRGIGYMLRPPE</sequence>
<evidence type="ECO:0000255" key="1">
    <source>
        <dbReference type="PROSITE-ProRule" id="PRU00169"/>
    </source>
</evidence>
<evidence type="ECO:0000255" key="2">
    <source>
        <dbReference type="PROSITE-ProRule" id="PRU01091"/>
    </source>
</evidence>
<evidence type="ECO:0000269" key="3">
    <source>
    </source>
</evidence>
<evidence type="ECO:0000269" key="4">
    <source>
    </source>
</evidence>
<evidence type="ECO:0000269" key="5">
    <source>
    </source>
</evidence>
<evidence type="ECO:0000269" key="6">
    <source>
    </source>
</evidence>
<evidence type="ECO:0000303" key="7">
    <source>
    </source>
</evidence>
<evidence type="ECO:0000305" key="8"/>
<evidence type="ECO:0000312" key="9">
    <source>
        <dbReference type="EMBL" id="CCP43784.1"/>
    </source>
</evidence>
<comment type="function">
    <text evidence="3 4 5 6">Member of the two-component regulatory system TrcS/TrcR (PubMed:10089160, PubMed:11914351). Activates its own expression by binding specifically to the AT-rich sequence of the trcR promoter region (PubMed:11914351). Also negatively regulates the expression of Rv1057 by binding to an AT-rich sequences within the Rv1057 upstream sequence (PubMed:16352831, PubMed:22099420). The TrcR-TrcS regulatory system may act as a transition regulatory system involved in adapting to an intracellular environment and transitioning from latency to reactivation (PubMed:11914351).</text>
</comment>
<comment type="induction">
    <text evidence="4">Expressed in broth-grown cultures and after 18 hours of M.tuberculosis growth in cultured human primary macrophages, but not after longer periods of macrophage infection (PubMed:11914351). Positively autoregulated (PubMed:11914351).</text>
</comment>
<comment type="PTM">
    <text evidence="3">Phosphorylated by TrcS.</text>
</comment>
<feature type="chain" id="PRO_0000451063" description="Transcriptional regulatory protein TrcR">
    <location>
        <begin position="1"/>
        <end position="257"/>
    </location>
</feature>
<feature type="domain" description="Response regulatory" evidence="1">
    <location>
        <begin position="33"/>
        <end position="147"/>
    </location>
</feature>
<feature type="DNA-binding region" description="OmpR/PhoB-type" evidence="2">
    <location>
        <begin position="158"/>
        <end position="255"/>
    </location>
</feature>
<feature type="modified residue" description="4-aspartylphosphate" evidence="1">
    <location>
        <position position="82"/>
    </location>
</feature>
<gene>
    <name evidence="7" type="primary">trcR</name>
    <name evidence="9" type="ordered locus">Rv1033c</name>
</gene>
<keyword id="KW-0010">Activator</keyword>
<keyword id="KW-0238">DNA-binding</keyword>
<keyword id="KW-0597">Phosphoprotein</keyword>
<keyword id="KW-1185">Reference proteome</keyword>
<keyword id="KW-0678">Repressor</keyword>
<keyword id="KW-0804">Transcription</keyword>
<keyword id="KW-0805">Transcription regulation</keyword>
<keyword id="KW-0902">Two-component regulatory system</keyword>
<protein>
    <recommendedName>
        <fullName evidence="8">Transcriptional regulatory protein TrcR</fullName>
    </recommendedName>
    <alternativeName>
        <fullName evidence="7">Tuberculosis regulatory component response regulator</fullName>
    </alternativeName>
</protein>
<reference key="1">
    <citation type="journal article" date="1998" name="Nature">
        <title>Deciphering the biology of Mycobacterium tuberculosis from the complete genome sequence.</title>
        <authorList>
            <person name="Cole S.T."/>
            <person name="Brosch R."/>
            <person name="Parkhill J."/>
            <person name="Garnier T."/>
            <person name="Churcher C.M."/>
            <person name="Harris D.E."/>
            <person name="Gordon S.V."/>
            <person name="Eiglmeier K."/>
            <person name="Gas S."/>
            <person name="Barry C.E. III"/>
            <person name="Tekaia F."/>
            <person name="Badcock K."/>
            <person name="Basham D."/>
            <person name="Brown D."/>
            <person name="Chillingworth T."/>
            <person name="Connor R."/>
            <person name="Davies R.M."/>
            <person name="Devlin K."/>
            <person name="Feltwell T."/>
            <person name="Gentles S."/>
            <person name="Hamlin N."/>
            <person name="Holroyd S."/>
            <person name="Hornsby T."/>
            <person name="Jagels K."/>
            <person name="Krogh A."/>
            <person name="McLean J."/>
            <person name="Moule S."/>
            <person name="Murphy L.D."/>
            <person name="Oliver S."/>
            <person name="Osborne J."/>
            <person name="Quail M.A."/>
            <person name="Rajandream M.A."/>
            <person name="Rogers J."/>
            <person name="Rutter S."/>
            <person name="Seeger K."/>
            <person name="Skelton S."/>
            <person name="Squares S."/>
            <person name="Squares R."/>
            <person name="Sulston J.E."/>
            <person name="Taylor K."/>
            <person name="Whitehead S."/>
            <person name="Barrell B.G."/>
        </authorList>
    </citation>
    <scope>NUCLEOTIDE SEQUENCE [LARGE SCALE GENOMIC DNA]</scope>
    <source>
        <strain>ATCC 25618 / H37Rv</strain>
    </source>
</reference>
<reference key="2">
    <citation type="journal article" date="1999" name="Microb. Pathog.">
        <title>In vitro evidence of two-component system phosphorylation between the Mycobacterium tuberculosis TrcR/TrcS proteins.</title>
        <authorList>
            <person name="Haydel S.E."/>
            <person name="Dunlap N.E."/>
            <person name="Benjamin W.H. Jr."/>
        </authorList>
    </citation>
    <scope>FUNCTION</scope>
    <scope>PHOSPHORYLATION</scope>
</reference>
<reference key="3">
    <citation type="journal article" date="2002" name="J. Bacteriol.">
        <title>Expression, autoregulation, and DNA binding properties of the Mycobacterium tuberculosis TrcR response regulator.</title>
        <authorList>
            <person name="Haydel S.E."/>
            <person name="Benjamin W.H. Jr."/>
            <person name="Dunlap N.E."/>
            <person name="Clark-Curtiss J.E."/>
        </authorList>
    </citation>
    <scope>FUNCTION</scope>
    <scope>DNA-BINDING</scope>
    <scope>INDUCTION</scope>
</reference>
<reference key="4">
    <citation type="journal article" date="2006" name="J. Bacteriol.">
        <title>The Mycobacterium tuberculosis TrcR response regulator represses transcription of the intracellularly expressed Rv1057 gene, encoding a seven-bladed beta-propeller.</title>
        <authorList>
            <person name="Haydel S.E."/>
            <person name="Clark-Curtiss J.E."/>
        </authorList>
    </citation>
    <scope>FUNCTION</scope>
    <scope>DNA-BINDING</scope>
</reference>
<reference key="5">
    <citation type="journal article" date="2011" name="Tuberculosis">
        <title>The beta-propeller gene Rv1057 of Mycobacterium tuberculosis has a complex promoter directly regulated by both the MprAB and TrcRS two-component systems.</title>
        <authorList>
            <person name="Pang X."/>
            <person name="Cao G."/>
            <person name="Neuenschwander P.F."/>
            <person name="Haydel S.E."/>
            <person name="Hou G."/>
            <person name="Howard S.T."/>
        </authorList>
    </citation>
    <scope>FUNCTION</scope>
</reference>